<dbReference type="EC" id="1.14.13.-"/>
<dbReference type="EMBL" id="AC069143">
    <property type="protein sequence ID" value="AAF82235.1"/>
    <property type="molecule type" value="Genomic_DNA"/>
</dbReference>
<dbReference type="EMBL" id="CP002684">
    <property type="protein sequence ID" value="AEE29823.1"/>
    <property type="molecule type" value="Genomic_DNA"/>
</dbReference>
<dbReference type="PIR" id="B86326">
    <property type="entry name" value="B86326"/>
</dbReference>
<dbReference type="RefSeq" id="NP_173359.3">
    <property type="nucleotide sequence ID" value="NM_101783.4"/>
</dbReference>
<dbReference type="SMR" id="Q9LMA1"/>
<dbReference type="BioGRID" id="23747">
    <property type="interactions" value="1"/>
</dbReference>
<dbReference type="STRING" id="3702.Q9LMA1"/>
<dbReference type="iPTMnet" id="Q9LMA1"/>
<dbReference type="PaxDb" id="3702-AT1G19250.1"/>
<dbReference type="EnsemblPlants" id="AT1G19250.1">
    <property type="protein sequence ID" value="AT1G19250.1"/>
    <property type="gene ID" value="AT1G19250"/>
</dbReference>
<dbReference type="GeneID" id="838508"/>
<dbReference type="Gramene" id="AT1G19250.1">
    <property type="protein sequence ID" value="AT1G19250.1"/>
    <property type="gene ID" value="AT1G19250"/>
</dbReference>
<dbReference type="KEGG" id="ath:AT1G19250"/>
<dbReference type="Araport" id="AT1G19250"/>
<dbReference type="TAIR" id="AT1G19250">
    <property type="gene designation" value="FMO1"/>
</dbReference>
<dbReference type="eggNOG" id="KOG1399">
    <property type="taxonomic scope" value="Eukaryota"/>
</dbReference>
<dbReference type="HOGENOM" id="CLU_006909_9_3_1"/>
<dbReference type="InParanoid" id="Q9LMA1"/>
<dbReference type="OMA" id="FKPWTGK"/>
<dbReference type="PhylomeDB" id="Q9LMA1"/>
<dbReference type="BioCyc" id="ARA:AT1G19250-MONOMER"/>
<dbReference type="BioCyc" id="MetaCyc:AT1G19250-MONOMER"/>
<dbReference type="BRENDA" id="1.14.13.8">
    <property type="organism ID" value="399"/>
</dbReference>
<dbReference type="PRO" id="PR:Q9LMA1"/>
<dbReference type="Proteomes" id="UP000006548">
    <property type="component" value="Chromosome 1"/>
</dbReference>
<dbReference type="ExpressionAtlas" id="Q9LMA1">
    <property type="expression patterns" value="baseline and differential"/>
</dbReference>
<dbReference type="GO" id="GO:0050660">
    <property type="term" value="F:flavin adenine dinucleotide binding"/>
    <property type="evidence" value="ECO:0007669"/>
    <property type="project" value="InterPro"/>
</dbReference>
<dbReference type="GO" id="GO:0004499">
    <property type="term" value="F:N,N-dimethylaniline monooxygenase activity"/>
    <property type="evidence" value="ECO:0007669"/>
    <property type="project" value="InterPro"/>
</dbReference>
<dbReference type="GO" id="GO:0050661">
    <property type="term" value="F:NADP binding"/>
    <property type="evidence" value="ECO:0007669"/>
    <property type="project" value="InterPro"/>
</dbReference>
<dbReference type="GO" id="GO:0031543">
    <property type="term" value="F:peptidyl-proline dioxygenase activity"/>
    <property type="evidence" value="ECO:0000315"/>
    <property type="project" value="TAIR"/>
</dbReference>
<dbReference type="GO" id="GO:0062047">
    <property type="term" value="F:pipecolic acid N-hydroxylase"/>
    <property type="evidence" value="ECO:0000315"/>
    <property type="project" value="TAIR"/>
</dbReference>
<dbReference type="GO" id="GO:0071456">
    <property type="term" value="P:cellular response to hypoxia"/>
    <property type="evidence" value="ECO:0000270"/>
    <property type="project" value="TAIR"/>
</dbReference>
<dbReference type="GO" id="GO:0042742">
    <property type="term" value="P:defense response to bacterium"/>
    <property type="evidence" value="ECO:0000315"/>
    <property type="project" value="TAIR"/>
</dbReference>
<dbReference type="GO" id="GO:0050832">
    <property type="term" value="P:defense response to fungus"/>
    <property type="evidence" value="ECO:0000315"/>
    <property type="project" value="TAIR"/>
</dbReference>
<dbReference type="GO" id="GO:0062034">
    <property type="term" value="P:L-pipecolic acid biosynthetic process"/>
    <property type="evidence" value="ECO:0000315"/>
    <property type="project" value="TAIR"/>
</dbReference>
<dbReference type="GO" id="GO:0009626">
    <property type="term" value="P:plant-type hypersensitive response"/>
    <property type="evidence" value="ECO:0000315"/>
    <property type="project" value="TAIR"/>
</dbReference>
<dbReference type="GO" id="GO:0051707">
    <property type="term" value="P:response to other organism"/>
    <property type="evidence" value="ECO:0000270"/>
    <property type="project" value="TAIR"/>
</dbReference>
<dbReference type="GO" id="GO:0009627">
    <property type="term" value="P:systemic acquired resistance"/>
    <property type="evidence" value="ECO:0000314"/>
    <property type="project" value="TAIR"/>
</dbReference>
<dbReference type="FunFam" id="3.50.50.60:FF:000167">
    <property type="entry name" value="Flavin-containing monooxygenase"/>
    <property type="match status" value="1"/>
</dbReference>
<dbReference type="FunFam" id="3.50.50.60:FF:000199">
    <property type="entry name" value="Flavin-containing monooxygenase"/>
    <property type="match status" value="1"/>
</dbReference>
<dbReference type="Gene3D" id="3.50.50.60">
    <property type="entry name" value="FAD/NAD(P)-binding domain"/>
    <property type="match status" value="2"/>
</dbReference>
<dbReference type="InterPro" id="IPR036188">
    <property type="entry name" value="FAD/NAD-bd_sf"/>
</dbReference>
<dbReference type="InterPro" id="IPR001613">
    <property type="entry name" value="Flavin_amine_oxidase"/>
</dbReference>
<dbReference type="InterPro" id="IPR000960">
    <property type="entry name" value="Flavin_mOase"/>
</dbReference>
<dbReference type="InterPro" id="IPR020946">
    <property type="entry name" value="Flavin_mOase-like"/>
</dbReference>
<dbReference type="InterPro" id="IPR050346">
    <property type="entry name" value="FMO-like"/>
</dbReference>
<dbReference type="PANTHER" id="PTHR23023">
    <property type="entry name" value="DIMETHYLANILINE MONOOXYGENASE"/>
    <property type="match status" value="1"/>
</dbReference>
<dbReference type="Pfam" id="PF00743">
    <property type="entry name" value="FMO-like"/>
    <property type="match status" value="1"/>
</dbReference>
<dbReference type="PIRSF" id="PIRSF000332">
    <property type="entry name" value="FMO"/>
    <property type="match status" value="1"/>
</dbReference>
<dbReference type="PRINTS" id="PR00757">
    <property type="entry name" value="AMINEOXDASEF"/>
</dbReference>
<dbReference type="SUPFAM" id="SSF51905">
    <property type="entry name" value="FAD/NAD(P)-binding domain"/>
    <property type="match status" value="2"/>
</dbReference>
<evidence type="ECO:0000250" key="1"/>
<evidence type="ECO:0000250" key="2">
    <source>
        <dbReference type="UniProtKB" id="Q9HFE4"/>
    </source>
</evidence>
<evidence type="ECO:0000269" key="3">
    <source>
    </source>
</evidence>
<evidence type="ECO:0000269" key="4">
    <source>
    </source>
</evidence>
<evidence type="ECO:0000305" key="5"/>
<proteinExistence type="evidence at transcript level"/>
<organism>
    <name type="scientific">Arabidopsis thaliana</name>
    <name type="common">Mouse-ear cress</name>
    <dbReference type="NCBI Taxonomy" id="3702"/>
    <lineage>
        <taxon>Eukaryota</taxon>
        <taxon>Viridiplantae</taxon>
        <taxon>Streptophyta</taxon>
        <taxon>Embryophyta</taxon>
        <taxon>Tracheophyta</taxon>
        <taxon>Spermatophyta</taxon>
        <taxon>Magnoliopsida</taxon>
        <taxon>eudicotyledons</taxon>
        <taxon>Gunneridae</taxon>
        <taxon>Pentapetalae</taxon>
        <taxon>rosids</taxon>
        <taxon>malvids</taxon>
        <taxon>Brassicales</taxon>
        <taxon>Brassicaceae</taxon>
        <taxon>Camelineae</taxon>
        <taxon>Arabidopsis</taxon>
    </lineage>
</organism>
<name>FMO1_ARATH</name>
<reference key="1">
    <citation type="journal article" date="2000" name="Nature">
        <title>Sequence and analysis of chromosome 1 of the plant Arabidopsis thaliana.</title>
        <authorList>
            <person name="Theologis A."/>
            <person name="Ecker J.R."/>
            <person name="Palm C.J."/>
            <person name="Federspiel N.A."/>
            <person name="Kaul S."/>
            <person name="White O."/>
            <person name="Alonso J."/>
            <person name="Altafi H."/>
            <person name="Araujo R."/>
            <person name="Bowman C.L."/>
            <person name="Brooks S.Y."/>
            <person name="Buehler E."/>
            <person name="Chan A."/>
            <person name="Chao Q."/>
            <person name="Chen H."/>
            <person name="Cheuk R.F."/>
            <person name="Chin C.W."/>
            <person name="Chung M.K."/>
            <person name="Conn L."/>
            <person name="Conway A.B."/>
            <person name="Conway A.R."/>
            <person name="Creasy T.H."/>
            <person name="Dewar K."/>
            <person name="Dunn P."/>
            <person name="Etgu P."/>
            <person name="Feldblyum T.V."/>
            <person name="Feng J.-D."/>
            <person name="Fong B."/>
            <person name="Fujii C.Y."/>
            <person name="Gill J.E."/>
            <person name="Goldsmith A.D."/>
            <person name="Haas B."/>
            <person name="Hansen N.F."/>
            <person name="Hughes B."/>
            <person name="Huizar L."/>
            <person name="Hunter J.L."/>
            <person name="Jenkins J."/>
            <person name="Johnson-Hopson C."/>
            <person name="Khan S."/>
            <person name="Khaykin E."/>
            <person name="Kim C.J."/>
            <person name="Koo H.L."/>
            <person name="Kremenetskaia I."/>
            <person name="Kurtz D.B."/>
            <person name="Kwan A."/>
            <person name="Lam B."/>
            <person name="Langin-Hooper S."/>
            <person name="Lee A."/>
            <person name="Lee J.M."/>
            <person name="Lenz C.A."/>
            <person name="Li J.H."/>
            <person name="Li Y.-P."/>
            <person name="Lin X."/>
            <person name="Liu S.X."/>
            <person name="Liu Z.A."/>
            <person name="Luros J.S."/>
            <person name="Maiti R."/>
            <person name="Marziali A."/>
            <person name="Militscher J."/>
            <person name="Miranda M."/>
            <person name="Nguyen M."/>
            <person name="Nierman W.C."/>
            <person name="Osborne B.I."/>
            <person name="Pai G."/>
            <person name="Peterson J."/>
            <person name="Pham P.K."/>
            <person name="Rizzo M."/>
            <person name="Rooney T."/>
            <person name="Rowley D."/>
            <person name="Sakano H."/>
            <person name="Salzberg S.L."/>
            <person name="Schwartz J.R."/>
            <person name="Shinn P."/>
            <person name="Southwick A.M."/>
            <person name="Sun H."/>
            <person name="Tallon L.J."/>
            <person name="Tambunga G."/>
            <person name="Toriumi M.J."/>
            <person name="Town C.D."/>
            <person name="Utterback T."/>
            <person name="Van Aken S."/>
            <person name="Vaysberg M."/>
            <person name="Vysotskaia V.S."/>
            <person name="Walker M."/>
            <person name="Wu D."/>
            <person name="Yu G."/>
            <person name="Fraser C.M."/>
            <person name="Venter J.C."/>
            <person name="Davis R.W."/>
        </authorList>
    </citation>
    <scope>NUCLEOTIDE SEQUENCE [LARGE SCALE GENOMIC DNA]</scope>
    <source>
        <strain>cv. Columbia</strain>
    </source>
</reference>
<reference key="2">
    <citation type="journal article" date="2017" name="Plant J.">
        <title>Araport11: a complete reannotation of the Arabidopsis thaliana reference genome.</title>
        <authorList>
            <person name="Cheng C.Y."/>
            <person name="Krishnakumar V."/>
            <person name="Chan A.P."/>
            <person name="Thibaud-Nissen F."/>
            <person name="Schobel S."/>
            <person name="Town C.D."/>
        </authorList>
    </citation>
    <scope>GENOME REANNOTATION</scope>
    <source>
        <strain>cv. Columbia</strain>
    </source>
</reference>
<reference key="3">
    <citation type="journal article" date="2006" name="Plant J.">
        <title>A role for a flavin-containing mono-oxygenase in resistance against microbial pathogens in Arabidopsis.</title>
        <authorList>
            <person name="Koch M."/>
            <person name="Vorwerk S."/>
            <person name="Masur C."/>
            <person name="Sharifi-Sirchi G."/>
            <person name="Olivieri N."/>
            <person name="Schlaich N.L."/>
        </authorList>
    </citation>
    <scope>FUNCTION</scope>
</reference>
<reference key="4">
    <citation type="journal article" date="2006" name="Plant Physiol.">
        <title>The Arabidopsis flavin-dependent monooxygenase FMO1 is an essential component of biologically induced systemic acquired resistance.</title>
        <authorList>
            <person name="Mishina T.E."/>
            <person name="Zeier J."/>
        </authorList>
    </citation>
    <scope>FUNCTION</scope>
    <scope>INDUCTION</scope>
</reference>
<reference key="5">
    <citation type="journal article" date="2007" name="Plant J.">
        <title>Identification of a flavin-monooxygenase as the S-oxygenating enzyme in aliphatic glucosinolate biosynthesis in Arabidopsis.</title>
        <authorList>
            <person name="Hansen B.G."/>
            <person name="Kliebenstein D.J."/>
            <person name="Halkier B.A."/>
        </authorList>
    </citation>
    <scope>GENE FAMILY</scope>
    <source>
        <strain>cv. Columbia</strain>
    </source>
</reference>
<sequence length="530" mass="60396">MASNYDKLTSSRVAIIGAGVSGLAAAKNLVHHNPTVFEASDSVGGVWRSCTYETTKLQSARVDYEFSDFPWPNNRDDTTFPPYLEILDYLESYAKHFDLLKFMKFGSKVIEVRFIGDGETPQMVDLGAYGNLLPGKPVWEVAVQIGDSGDIQWHAFEFVVVCTGKYGDVPRIPAFPAKKGPEMFQGKVMHSMDYCKLEKEEASTLLSGKKVAVIGFKKSAIDLALESALANQGEGGKACTMVVRTTHWGIPHYWVWGLPFFLFYSSRASQFLHDRPNQSFLRTLFCLLFSLLRAVVSKFIESYVLWKLPLEKYGLKPNHSFEEDYASCQMAIIPENFFEEADKGMIRFKKSSKWWFYEEGIVFEDGTTLEADVVILATGYDGKKKLKAIVPEPFRTWLEFPSGVMPLYRGTIHPLIPNMGFVGYVQSSSNLHTSELRSMWLSRLVDEKFRLPSKEKMLDQFLKEMEVTRNSSRFYKRHCISTFSIQHADDMCNDMGLNPWRKSNFLLEAFSPYGSQDYRLGQEEKEDMTA</sequence>
<accession>Q9LMA1</accession>
<comment type="function">
    <text evidence="3 4">Required for the establishment of systemic acquired resistance (SAR). Not involved in local defense mechanisms. Confers a salicylic acid-dependent (SA) resistance to virulent pathogens such as P.syringae pv tomato and H.parasitica.</text>
</comment>
<comment type="cofactor">
    <cofactor evidence="1">
        <name>FAD</name>
        <dbReference type="ChEBI" id="CHEBI:57692"/>
    </cofactor>
</comment>
<comment type="induction">
    <text evidence="3">Locally and systemically up-regulated by the bacterial pathogen P.syringae.</text>
</comment>
<comment type="similarity">
    <text evidence="5">Belongs to the FMO family.</text>
</comment>
<feature type="chain" id="PRO_0000249421" description="Probable flavin-containing monooxygenase 1">
    <location>
        <begin position="1"/>
        <end position="530"/>
    </location>
</feature>
<feature type="binding site" evidence="2">
    <location>
        <begin position="17"/>
        <end position="21"/>
    </location>
    <ligand>
        <name>FAD</name>
        <dbReference type="ChEBI" id="CHEBI:57692"/>
    </ligand>
</feature>
<feature type="binding site" evidence="2">
    <location>
        <position position="38"/>
    </location>
    <ligand>
        <name>FAD</name>
        <dbReference type="ChEBI" id="CHEBI:57692"/>
    </ligand>
</feature>
<feature type="binding site" evidence="2">
    <location>
        <begin position="46"/>
        <end position="47"/>
    </location>
    <ligand>
        <name>FAD</name>
        <dbReference type="ChEBI" id="CHEBI:57692"/>
    </ligand>
</feature>
<feature type="binding site" evidence="2">
    <location>
        <begin position="58"/>
        <end position="59"/>
    </location>
    <ligand>
        <name>FAD</name>
        <dbReference type="ChEBI" id="CHEBI:57692"/>
    </ligand>
</feature>
<feature type="binding site" evidence="2">
    <location>
        <begin position="219"/>
        <end position="222"/>
    </location>
    <ligand>
        <name>NADP(+)</name>
        <dbReference type="ChEBI" id="CHEBI:58349"/>
    </ligand>
</feature>
<gene>
    <name type="primary">FMO1</name>
    <name type="ordered locus">At1g19250</name>
    <name type="ORF">T29M8.12</name>
</gene>
<protein>
    <recommendedName>
        <fullName>Probable flavin-containing monooxygenase 1</fullName>
        <ecNumber>1.14.13.-</ecNumber>
    </recommendedName>
</protein>
<keyword id="KW-0274">FAD</keyword>
<keyword id="KW-0285">Flavoprotein</keyword>
<keyword id="KW-0503">Monooxygenase</keyword>
<keyword id="KW-0521">NADP</keyword>
<keyword id="KW-0560">Oxidoreductase</keyword>
<keyword id="KW-0611">Plant defense</keyword>
<keyword id="KW-1185">Reference proteome</keyword>